<accession>Q6DCH7</accession>
<protein>
    <recommendedName>
        <fullName evidence="2">Methanethiol oxidase</fullName>
        <shortName evidence="2">MTO</shortName>
        <ecNumber evidence="2">1.8.3.4</ecNumber>
    </recommendedName>
    <alternativeName>
        <fullName>Selenium-binding protein 1-B</fullName>
    </alternativeName>
</protein>
<keyword id="KW-0963">Cytoplasm</keyword>
<keyword id="KW-0472">Membrane</keyword>
<keyword id="KW-0539">Nucleus</keyword>
<keyword id="KW-0560">Oxidoreductase</keyword>
<keyword id="KW-0653">Protein transport</keyword>
<keyword id="KW-1185">Reference proteome</keyword>
<keyword id="KW-0711">Selenium</keyword>
<keyword id="KW-0813">Transport</keyword>
<feature type="chain" id="PRO_0000289066" description="Methanethiol oxidase">
    <location>
        <begin position="1"/>
        <end position="472"/>
    </location>
</feature>
<reference key="1">
    <citation type="submission" date="2004-07" db="EMBL/GenBank/DDBJ databases">
        <authorList>
            <consortium name="NIH - Xenopus Gene Collection (XGC) project"/>
        </authorList>
    </citation>
    <scope>NUCLEOTIDE SEQUENCE [LARGE SCALE MRNA]</scope>
    <source>
        <tissue>Spleen</tissue>
    </source>
</reference>
<sequence>MAKCGSCGPGYKSPLDAMKGPREEIVYLPCIYRSTGINKPDYLATVDVDPKSPTYSQVIHRLPMPNVNDELHHSGWNTCSSCYGDSSKVRNKLILPCLISSRVYVVDVGTDPRAPRLHKTVEPHEVYWKCGLANLHTSHCLGCGEIMISALGDPCGNGKGGFVLLDGETFEVKGNWEAEGETAQFGYDFWYQPRHNVMISTEWGAPKAFALGFKMEDVLAGQYGHSLNVWDWTEHRLVQTIDLGKDGLIPLEIRFLHNPDADQGLVGCALSSSIFRFYKEKDGKWAAEKVIQVPSKKVEGWALPEMPGLITDILISLDDRFLYFSNWLHGDIRQYDITNIRNPKLVGQIFLGGSIQKGGPVAVQEDKELECQPDPVTVKGKIIPGGPQMIQLSLDGKRIYVTSSIYSIWDKQFYPDMLKEGAVMLQIDVDTEKGGLKLNPNFLVDFGKEPDGPVLAHELRYPGGDCSSDIWI</sequence>
<proteinExistence type="evidence at transcript level"/>
<dbReference type="EC" id="1.8.3.4" evidence="2"/>
<dbReference type="EMBL" id="BC078056">
    <property type="protein sequence ID" value="AAH78056.1"/>
    <property type="molecule type" value="mRNA"/>
</dbReference>
<dbReference type="SMR" id="Q6DCH7"/>
<dbReference type="DNASU" id="447027"/>
<dbReference type="GeneID" id="447027"/>
<dbReference type="KEGG" id="xla:447027"/>
<dbReference type="AGR" id="Xenbase:XB-GENE-6254577"/>
<dbReference type="CTD" id="447027"/>
<dbReference type="Xenbase" id="XB-GENE-6254577">
    <property type="gene designation" value="selenbp1.S"/>
</dbReference>
<dbReference type="OMA" id="ANWDKKG"/>
<dbReference type="OrthoDB" id="10252446at2759"/>
<dbReference type="Proteomes" id="UP000186698">
    <property type="component" value="Chromosome 8S"/>
</dbReference>
<dbReference type="Bgee" id="447027">
    <property type="expression patterns" value="Expressed in internal ear and 20 other cell types or tissues"/>
</dbReference>
<dbReference type="GO" id="GO:0005829">
    <property type="term" value="C:cytosol"/>
    <property type="evidence" value="ECO:0007669"/>
    <property type="project" value="UniProtKB-SubCell"/>
</dbReference>
<dbReference type="GO" id="GO:0016020">
    <property type="term" value="C:membrane"/>
    <property type="evidence" value="ECO:0007669"/>
    <property type="project" value="UniProtKB-SubCell"/>
</dbReference>
<dbReference type="GO" id="GO:0005634">
    <property type="term" value="C:nucleus"/>
    <property type="evidence" value="ECO:0007669"/>
    <property type="project" value="UniProtKB-SubCell"/>
</dbReference>
<dbReference type="GO" id="GO:0018549">
    <property type="term" value="F:methanethiol oxidase activity"/>
    <property type="evidence" value="ECO:0007669"/>
    <property type="project" value="UniProtKB-EC"/>
</dbReference>
<dbReference type="GO" id="GO:0008430">
    <property type="term" value="F:selenium binding"/>
    <property type="evidence" value="ECO:0007669"/>
    <property type="project" value="InterPro"/>
</dbReference>
<dbReference type="GO" id="GO:0015031">
    <property type="term" value="P:protein transport"/>
    <property type="evidence" value="ECO:0007669"/>
    <property type="project" value="UniProtKB-KW"/>
</dbReference>
<dbReference type="Gene3D" id="2.130.10.10">
    <property type="entry name" value="YVTN repeat-like/Quinoprotein amine dehydrogenase"/>
    <property type="match status" value="1"/>
</dbReference>
<dbReference type="InterPro" id="IPR008826">
    <property type="entry name" value="Se-bd"/>
</dbReference>
<dbReference type="InterPro" id="IPR015943">
    <property type="entry name" value="WD40/YVTN_repeat-like_dom_sf"/>
</dbReference>
<dbReference type="PANTHER" id="PTHR23300">
    <property type="entry name" value="METHANETHIOL OXIDASE"/>
    <property type="match status" value="1"/>
</dbReference>
<dbReference type="PANTHER" id="PTHR23300:SF0">
    <property type="entry name" value="METHANETHIOL OXIDASE"/>
    <property type="match status" value="1"/>
</dbReference>
<dbReference type="Pfam" id="PF05694">
    <property type="entry name" value="SBP56"/>
    <property type="match status" value="1"/>
</dbReference>
<dbReference type="SUPFAM" id="SSF75011">
    <property type="entry name" value="3-carboxy-cis,cis-mucoante lactonizing enzyme"/>
    <property type="match status" value="1"/>
</dbReference>
<comment type="function">
    <text evidence="2 3">Catalyzes the oxidation of methanethiol, an organosulfur compound known to be produced in substantial amounts by gut bacteria (By similarity). Selenium-binding protein which may be involved in the sensing of reactive xenobiotics in the cytoplasm. May be involved in intra-Golgi protein transport (By similarity).</text>
</comment>
<comment type="catalytic activity">
    <reaction evidence="2">
        <text>methanethiol + O2 + H2O = hydrogen sulfide + formaldehyde + H2O2 + H(+)</text>
        <dbReference type="Rhea" id="RHEA:11812"/>
        <dbReference type="ChEBI" id="CHEBI:15377"/>
        <dbReference type="ChEBI" id="CHEBI:15378"/>
        <dbReference type="ChEBI" id="CHEBI:15379"/>
        <dbReference type="ChEBI" id="CHEBI:16007"/>
        <dbReference type="ChEBI" id="CHEBI:16240"/>
        <dbReference type="ChEBI" id="CHEBI:16842"/>
        <dbReference type="ChEBI" id="CHEBI:29919"/>
        <dbReference type="EC" id="1.8.3.4"/>
    </reaction>
</comment>
<comment type="pathway">
    <text evidence="2">Organosulfur degradation.</text>
</comment>
<comment type="subcellular location">
    <subcellularLocation>
        <location evidence="1">Nucleus</location>
    </subcellularLocation>
    <subcellularLocation>
        <location evidence="1">Cytoplasm</location>
        <location evidence="1">Cytosol</location>
    </subcellularLocation>
    <subcellularLocation>
        <location evidence="1">Membrane</location>
        <topology evidence="1">Peripheral membrane protein</topology>
    </subcellularLocation>
</comment>
<comment type="similarity">
    <text evidence="4">Belongs to the selenium-binding protein family.</text>
</comment>
<organism>
    <name type="scientific">Xenopus laevis</name>
    <name type="common">African clawed frog</name>
    <dbReference type="NCBI Taxonomy" id="8355"/>
    <lineage>
        <taxon>Eukaryota</taxon>
        <taxon>Metazoa</taxon>
        <taxon>Chordata</taxon>
        <taxon>Craniata</taxon>
        <taxon>Vertebrata</taxon>
        <taxon>Euteleostomi</taxon>
        <taxon>Amphibia</taxon>
        <taxon>Batrachia</taxon>
        <taxon>Anura</taxon>
        <taxon>Pipoidea</taxon>
        <taxon>Pipidae</taxon>
        <taxon>Xenopodinae</taxon>
        <taxon>Xenopus</taxon>
        <taxon>Xenopus</taxon>
    </lineage>
</organism>
<name>SBP1B_XENLA</name>
<evidence type="ECO:0000250" key="1"/>
<evidence type="ECO:0000250" key="2">
    <source>
        <dbReference type="UniProtKB" id="Q13228"/>
    </source>
</evidence>
<evidence type="ECO:0000250" key="3">
    <source>
        <dbReference type="UniProtKB" id="Q8VIF7"/>
    </source>
</evidence>
<evidence type="ECO:0000305" key="4"/>
<gene>
    <name type="primary">selenbp1-b</name>
</gene>